<organism>
    <name type="scientific">Caenorhabditis elegans</name>
    <dbReference type="NCBI Taxonomy" id="6239"/>
    <lineage>
        <taxon>Eukaryota</taxon>
        <taxon>Metazoa</taxon>
        <taxon>Ecdysozoa</taxon>
        <taxon>Nematoda</taxon>
        <taxon>Chromadorea</taxon>
        <taxon>Rhabditida</taxon>
        <taxon>Rhabditina</taxon>
        <taxon>Rhabditomorpha</taxon>
        <taxon>Rhabditoidea</taxon>
        <taxon>Rhabditidae</taxon>
        <taxon>Peloderinae</taxon>
        <taxon>Caenorhabditis</taxon>
    </lineage>
</organism>
<reference evidence="5" key="1">
    <citation type="journal article" date="1994" name="Nature">
        <title>2.2 Mb of contiguous nucleotide sequence from chromosome III of C. elegans.</title>
        <authorList>
            <person name="Wilson R."/>
            <person name="Ainscough R."/>
            <person name="Anderson K."/>
            <person name="Baynes C."/>
            <person name="Berks M."/>
            <person name="Bonfield J."/>
            <person name="Burton J."/>
            <person name="Connell M."/>
            <person name="Copsey T."/>
            <person name="Cooper J."/>
            <person name="Coulson A."/>
            <person name="Craxton M."/>
            <person name="Dear S."/>
            <person name="Du Z."/>
            <person name="Durbin R."/>
            <person name="Favello A."/>
            <person name="Fraser A."/>
            <person name="Fulton L."/>
            <person name="Gardner A."/>
            <person name="Green P."/>
            <person name="Hawkins T."/>
            <person name="Hillier L."/>
            <person name="Jier M."/>
            <person name="Johnston L."/>
            <person name="Jones M."/>
            <person name="Kershaw J."/>
            <person name="Kirsten J."/>
            <person name="Laisster N."/>
            <person name="Latreille P."/>
            <person name="Lightning J."/>
            <person name="Lloyd C."/>
            <person name="Mortimore B."/>
            <person name="O'Callaghan M."/>
            <person name="Parsons J."/>
            <person name="Percy C."/>
            <person name="Rifken L."/>
            <person name="Roopra A."/>
            <person name="Saunders D."/>
            <person name="Shownkeen R."/>
            <person name="Sims M."/>
            <person name="Smaldon N."/>
            <person name="Smith A."/>
            <person name="Smith M."/>
            <person name="Sonnhammer E."/>
            <person name="Staden R."/>
            <person name="Sulston J."/>
            <person name="Thierry-Mieg J."/>
            <person name="Thomas K."/>
            <person name="Vaudin M."/>
            <person name="Vaughan K."/>
            <person name="Waterston R."/>
            <person name="Watson A."/>
            <person name="Weinstock L."/>
            <person name="Wilkinson-Sproat J."/>
            <person name="Wohldman P."/>
        </authorList>
    </citation>
    <scope>NUCLEOTIDE SEQUENCE [LARGE SCALE GENOMIC DNA]</scope>
    <source>
        <strain>Bristol N2</strain>
    </source>
</reference>
<reference key="2">
    <citation type="journal article" date="1998" name="Science">
        <title>Genome sequence of the nematode C. elegans: a platform for investigating biology.</title>
        <authorList>
            <consortium name="The C. elegans sequencing consortium"/>
        </authorList>
    </citation>
    <scope>NUCLEOTIDE SEQUENCE [LARGE SCALE GENOMIC DNA]</scope>
    <source>
        <strain>Bristol N2</strain>
    </source>
</reference>
<reference key="3">
    <citation type="journal article" date="2017" name="Chem. Sci.">
        <title>Structure and conserved function of iso-branched sphingoid bases from the nematode Caenorhabditis elegans.</title>
        <authorList>
            <person name="Hannich J.T."/>
            <person name="Mellal D."/>
            <person name="Feng S."/>
            <person name="Zumbuehl A."/>
            <person name="Riezman H."/>
        </authorList>
    </citation>
    <scope>FUNCTION</scope>
</reference>
<feature type="signal peptide" evidence="3">
    <location>
        <begin position="1"/>
        <end position="16"/>
    </location>
</feature>
<feature type="chain" id="PRO_0000012233" description="Putative galactocerebrosidase">
    <location>
        <begin position="17"/>
        <end position="645"/>
    </location>
</feature>
<feature type="active site" description="Proton donor/acceptor" evidence="1">
    <location>
        <position position="172"/>
    </location>
</feature>
<feature type="active site" description="Nucleophile" evidence="1">
    <location>
        <position position="248"/>
    </location>
</feature>
<feature type="binding site" evidence="1">
    <location>
        <position position="87"/>
    </location>
    <ligand>
        <name>substrate</name>
    </ligand>
</feature>
<feature type="binding site" evidence="1">
    <location>
        <position position="128"/>
    </location>
    <ligand>
        <name>substrate</name>
    </ligand>
</feature>
<feature type="binding site" evidence="1">
    <location>
        <position position="171"/>
    </location>
    <ligand>
        <name>substrate</name>
    </ligand>
</feature>
<feature type="glycosylation site" description="N-linked (GlcNAc...) asparagine" evidence="3">
    <location>
        <position position="141"/>
    </location>
</feature>
<feature type="glycosylation site" description="N-linked (GlcNAc...) asparagine" evidence="3">
    <location>
        <position position="174"/>
    </location>
</feature>
<feature type="glycosylation site" description="N-linked (GlcNAc...) asparagine" evidence="3">
    <location>
        <position position="193"/>
    </location>
</feature>
<feature type="glycosylation site" description="N-linked (GlcNAc...) asparagine" evidence="3">
    <location>
        <position position="274"/>
    </location>
</feature>
<feature type="glycosylation site" description="N-linked (GlcNAc...) asparagine" evidence="3">
    <location>
        <position position="395"/>
    </location>
</feature>
<feature type="glycosylation site" description="N-linked (GlcNAc...) asparagine" evidence="3">
    <location>
        <position position="411"/>
    </location>
</feature>
<feature type="glycosylation site" description="N-linked (GlcNAc...) asparagine" evidence="3">
    <location>
        <position position="532"/>
    </location>
</feature>
<feature type="glycosylation site" description="N-linked (GlcNAc...) asparagine" evidence="3">
    <location>
        <position position="616"/>
    </location>
</feature>
<feature type="glycosylation site" description="N-linked (GlcNAc...) asparagine" evidence="3">
    <location>
        <position position="620"/>
    </location>
</feature>
<feature type="glycosylation site" description="N-linked (GlcNAc...) asparagine" evidence="3">
    <location>
        <position position="638"/>
    </location>
</feature>
<feature type="disulfide bond" evidence="1">
    <location>
        <begin position="261"/>
        <end position="365"/>
    </location>
</feature>
<accession>Q95QT2</accession>
<sequence length="645" mass="73805">MFSIFIKIILILPSIATKTNNIDIKSWRSAQTFDGFGAVSGGGATSKLLFTYFSEKSDRKQVLESLFNKDNGLQLLKVEMGGDDQSTEGTESSHESEKGKISKNNYEFQLISEVREINPTIPICVLPWAFPGWIGNTPYDNVTETAEYVVNWLKIGRDTWNFDTFCVGVWNERNFSESYVKELRKILNLNGFNETLIVAGEGFRMDDSYSRLLDKRFINEYDIIGVHYPGGRIPENVQKSGKVIWASEDYSTDNRDTGEGCMARTMNWNFINGNITGMISWHLMSAFYPQLPWYRCGLARIDENKFQTEKAFHVLKYITSHVKRGWKILRESSGRFDGGGTYVTYTNGKDSTIFVETMSYKKSLCEYSSPRPYHVKPSQLIRFKFSEIPSFQGLNMSLNFGPSKFFSKSVNSTITILLPVNSFGILTTLPVSTPKRVTIKTPLVPLNYHDDFENYEFDEEPKFWMPQKGSWVVRNGRAVQKVTRPSISWCTSHIRTPYAVMAYRKKNSILNAEVNIPKHSTAKSIILGIRSNCSGCDIEVINCRGIFVEIEFSNKKVTIFSDFVDRSIIAEFKARRKVEFGKFYKFSIHLLDSHLFIKFGNHHVMTSVEIPEEQLNKTNNDTLFVIGTGNFGISEWDNISTDYFH</sequence>
<name>GALC_CAEEL</name>
<gene>
    <name type="ORF">C29E4.10</name>
</gene>
<protein>
    <recommendedName>
        <fullName>Putative galactocerebrosidase</fullName>
        <shortName>GALCERase</shortName>
        <ecNumber>3.2.1.46</ecNumber>
    </recommendedName>
    <alternativeName>
        <fullName>Galactocerebroside beta-galactosidase</fullName>
    </alternativeName>
    <alternativeName>
        <fullName>Galactosylceramidase</fullName>
    </alternativeName>
    <alternativeName>
        <fullName>Galactosylceramide beta-galactosidase</fullName>
    </alternativeName>
</protein>
<keyword id="KW-1015">Disulfide bond</keyword>
<keyword id="KW-0325">Glycoprotein</keyword>
<keyword id="KW-0326">Glycosidase</keyword>
<keyword id="KW-0378">Hydrolase</keyword>
<keyword id="KW-0442">Lipid degradation</keyword>
<keyword id="KW-0443">Lipid metabolism</keyword>
<keyword id="KW-1185">Reference proteome</keyword>
<keyword id="KW-0732">Signal</keyword>
<keyword id="KW-0746">Sphingolipid metabolism</keyword>
<dbReference type="EC" id="3.2.1.46"/>
<dbReference type="EMBL" id="FO080706">
    <property type="protein sequence ID" value="CCD66013.2"/>
    <property type="molecule type" value="Genomic_DNA"/>
</dbReference>
<dbReference type="RefSeq" id="NP_498726.3">
    <property type="nucleotide sequence ID" value="NM_066325.5"/>
</dbReference>
<dbReference type="SMR" id="Q95QT2"/>
<dbReference type="FunCoup" id="Q95QT2">
    <property type="interactions" value="895"/>
</dbReference>
<dbReference type="STRING" id="6239.C29E4.10.1"/>
<dbReference type="CAZy" id="GH59">
    <property type="family name" value="Glycoside Hydrolase Family 59"/>
</dbReference>
<dbReference type="PaxDb" id="6239-C29E4.10"/>
<dbReference type="PeptideAtlas" id="Q95QT2"/>
<dbReference type="EnsemblMetazoa" id="C29E4.10.1">
    <property type="protein sequence ID" value="C29E4.10.1"/>
    <property type="gene ID" value="WBGene00016207"/>
</dbReference>
<dbReference type="GeneID" id="183002"/>
<dbReference type="KEGG" id="cel:CELE_C29E4.10"/>
<dbReference type="UCSC" id="C29E4.10">
    <property type="organism name" value="c. elegans"/>
</dbReference>
<dbReference type="AGR" id="WB:WBGene00016207"/>
<dbReference type="CTD" id="183002"/>
<dbReference type="WormBase" id="C29E4.10">
    <property type="protein sequence ID" value="CE47094"/>
    <property type="gene ID" value="WBGene00016207"/>
</dbReference>
<dbReference type="eggNOG" id="ENOG502QQ1Q">
    <property type="taxonomic scope" value="Eukaryota"/>
</dbReference>
<dbReference type="GeneTree" id="ENSGT00390000003303"/>
<dbReference type="HOGENOM" id="CLU_508307_0_0_1"/>
<dbReference type="InParanoid" id="Q95QT2"/>
<dbReference type="OMA" id="NRNYVHG"/>
<dbReference type="OrthoDB" id="440760at2759"/>
<dbReference type="PhylomeDB" id="Q95QT2"/>
<dbReference type="Reactome" id="R-CEL-9840310">
    <property type="pathway name" value="Glycosphingolipid catabolism"/>
</dbReference>
<dbReference type="PRO" id="PR:Q95QT2"/>
<dbReference type="Proteomes" id="UP000001940">
    <property type="component" value="Chromosome III"/>
</dbReference>
<dbReference type="Bgee" id="WBGene00016207">
    <property type="expression patterns" value="Expressed in adult organism and 1 other cell type or tissue"/>
</dbReference>
<dbReference type="GO" id="GO:0005764">
    <property type="term" value="C:lysosome"/>
    <property type="evidence" value="ECO:0000318"/>
    <property type="project" value="GO_Central"/>
</dbReference>
<dbReference type="GO" id="GO:0016020">
    <property type="term" value="C:membrane"/>
    <property type="evidence" value="ECO:0007669"/>
    <property type="project" value="GOC"/>
</dbReference>
<dbReference type="GO" id="GO:0004336">
    <property type="term" value="F:galactosylceramidase activity"/>
    <property type="evidence" value="ECO:0000318"/>
    <property type="project" value="GO_Central"/>
</dbReference>
<dbReference type="GO" id="GO:0006683">
    <property type="term" value="P:galactosylceramide catabolic process"/>
    <property type="evidence" value="ECO:0000318"/>
    <property type="project" value="GO_Central"/>
</dbReference>
<dbReference type="FunFam" id="3.20.20.80:FF:000517">
    <property type="entry name" value="Putative galactocerebrosidase"/>
    <property type="match status" value="1"/>
</dbReference>
<dbReference type="Gene3D" id="3.20.20.70">
    <property type="entry name" value="Aldolase class I"/>
    <property type="match status" value="1"/>
</dbReference>
<dbReference type="Gene3D" id="2.60.120.560">
    <property type="entry name" value="Exo-inulinase, domain 1"/>
    <property type="match status" value="1"/>
</dbReference>
<dbReference type="Gene3D" id="3.20.20.80">
    <property type="entry name" value="Glycosidases"/>
    <property type="match status" value="1"/>
</dbReference>
<dbReference type="InterPro" id="IPR013785">
    <property type="entry name" value="Aldolase_TIM"/>
</dbReference>
<dbReference type="InterPro" id="IPR049162">
    <property type="entry name" value="GH59_C"/>
</dbReference>
<dbReference type="InterPro" id="IPR049161">
    <property type="entry name" value="GH59_cat"/>
</dbReference>
<dbReference type="InterPro" id="IPR001286">
    <property type="entry name" value="Glyco_hydro_59"/>
</dbReference>
<dbReference type="InterPro" id="IPR035394">
    <property type="entry name" value="Glyco_hydro_59_dom"/>
</dbReference>
<dbReference type="InterPro" id="IPR017853">
    <property type="entry name" value="Glycoside_hydrolase_SF"/>
</dbReference>
<dbReference type="PANTHER" id="PTHR15172">
    <property type="entry name" value="GALACTOCEREBROSIDASE"/>
    <property type="match status" value="1"/>
</dbReference>
<dbReference type="PANTHER" id="PTHR15172:SF1">
    <property type="entry name" value="GALACTOCEREBROSIDASE"/>
    <property type="match status" value="1"/>
</dbReference>
<dbReference type="Pfam" id="PF02057">
    <property type="entry name" value="Glyco_hydro_59"/>
    <property type="match status" value="1"/>
</dbReference>
<dbReference type="Pfam" id="PF21708">
    <property type="entry name" value="Glyco_hydro_59_C"/>
    <property type="match status" value="1"/>
</dbReference>
<dbReference type="Pfam" id="PF17387">
    <property type="entry name" value="Glyco_hydro_59M"/>
    <property type="match status" value="1"/>
</dbReference>
<dbReference type="PRINTS" id="PR00850">
    <property type="entry name" value="GLHYDRLASE59"/>
</dbReference>
<dbReference type="SUPFAM" id="SSF51445">
    <property type="entry name" value="(Trans)glycosidases"/>
    <property type="match status" value="1"/>
</dbReference>
<comment type="function">
    <text evidence="2 4">Hydrolyzes the galactose ester bonds of galactosylceramide, galactosylsphingoid base, lactosylceramide, and monogalactosyldiglyceride (By similarity). C.elegans contain specific sphingoid bases, which are unique or different in structure compared to the sphingoid bases found in other animals. Two examples of these distinctive compounds are: 15-methylhexadecasphinganine and 15-methylhexadecasphing-4-enine (PubMed:30155209).</text>
</comment>
<comment type="catalytic activity">
    <reaction evidence="5">
        <text>a beta-D-Gal-(1&lt;-&gt;1')-ceramide + H2O = an N-acyl-sphingoid base + D-galactose</text>
        <dbReference type="Rhea" id="RHEA:81443"/>
        <dbReference type="ChEBI" id="CHEBI:4139"/>
        <dbReference type="ChEBI" id="CHEBI:15377"/>
        <dbReference type="ChEBI" id="CHEBI:83273"/>
        <dbReference type="ChEBI" id="CHEBI:143593"/>
    </reaction>
    <physiologicalReaction direction="left-to-right" evidence="5">
        <dbReference type="Rhea" id="RHEA:81444"/>
    </physiologicalReaction>
</comment>
<comment type="catalytic activity">
    <reaction evidence="2">
        <text>a beta-D-galactosyl-(1&lt;-&gt;1')-N-acylsphing-4-enine + H2O = an N-acylsphing-4-enine + D-galactose</text>
        <dbReference type="Rhea" id="RHEA:14297"/>
        <dbReference type="ChEBI" id="CHEBI:4139"/>
        <dbReference type="ChEBI" id="CHEBI:15377"/>
        <dbReference type="ChEBI" id="CHEBI:18390"/>
        <dbReference type="ChEBI" id="CHEBI:52639"/>
        <dbReference type="EC" id="3.2.1.46"/>
    </reaction>
</comment>
<comment type="similarity">
    <text evidence="5">Belongs to the glycosyl hydrolase 59 family.</text>
</comment>
<evidence type="ECO:0000250" key="1"/>
<evidence type="ECO:0000250" key="2">
    <source>
        <dbReference type="UniProtKB" id="P54803"/>
    </source>
</evidence>
<evidence type="ECO:0000255" key="3"/>
<evidence type="ECO:0000269" key="4">
    <source>
    </source>
</evidence>
<evidence type="ECO:0000305" key="5"/>
<proteinExistence type="inferred from homology"/>